<accession>A9KGW7</accession>
<reference key="1">
    <citation type="journal article" date="2009" name="Infect. Immun.">
        <title>Comparative genomics reveal extensive transposon-mediated genomic plasticity and diversity among potential effector proteins within the genus Coxiella.</title>
        <authorList>
            <person name="Beare P.A."/>
            <person name="Unsworth N."/>
            <person name="Andoh M."/>
            <person name="Voth D.E."/>
            <person name="Omsland A."/>
            <person name="Gilk S.D."/>
            <person name="Williams K.P."/>
            <person name="Sobral B.W."/>
            <person name="Kupko J.J. III"/>
            <person name="Porcella S.F."/>
            <person name="Samuel J.E."/>
            <person name="Heinzen R.A."/>
        </authorList>
    </citation>
    <scope>NUCLEOTIDE SEQUENCE [LARGE SCALE GENOMIC DNA]</scope>
    <source>
        <strain>Dugway 5J108-111</strain>
    </source>
</reference>
<evidence type="ECO:0000255" key="1">
    <source>
        <dbReference type="HAMAP-Rule" id="MF_01635"/>
    </source>
</evidence>
<comment type="function">
    <text evidence="1">Catalyzes the prenylation of para-hydroxybenzoate (PHB) with an all-trans polyprenyl group. Mediates the second step in the final reaction sequence of ubiquinone-8 (UQ-8) biosynthesis, which is the condensation of the polyisoprenoid side chain with PHB, generating the first membrane-bound Q intermediate 3-octaprenyl-4-hydroxybenzoate.</text>
</comment>
<comment type="catalytic activity">
    <reaction evidence="1">
        <text>all-trans-octaprenyl diphosphate + 4-hydroxybenzoate = 4-hydroxy-3-(all-trans-octaprenyl)benzoate + diphosphate</text>
        <dbReference type="Rhea" id="RHEA:27782"/>
        <dbReference type="ChEBI" id="CHEBI:1617"/>
        <dbReference type="ChEBI" id="CHEBI:17879"/>
        <dbReference type="ChEBI" id="CHEBI:33019"/>
        <dbReference type="ChEBI" id="CHEBI:57711"/>
        <dbReference type="EC" id="2.5.1.39"/>
    </reaction>
</comment>
<comment type="cofactor">
    <cofactor evidence="1">
        <name>Mg(2+)</name>
        <dbReference type="ChEBI" id="CHEBI:18420"/>
    </cofactor>
</comment>
<comment type="pathway">
    <text evidence="1">Cofactor biosynthesis; ubiquinone biosynthesis.</text>
</comment>
<comment type="subcellular location">
    <subcellularLocation>
        <location evidence="1">Cell inner membrane</location>
        <topology evidence="1">Multi-pass membrane protein</topology>
    </subcellularLocation>
</comment>
<comment type="similarity">
    <text evidence="1">Belongs to the UbiA prenyltransferase family.</text>
</comment>
<proteinExistence type="inferred from homology"/>
<gene>
    <name evidence="1" type="primary">ubiA</name>
    <name type="ordered locus">CBUD_2048</name>
</gene>
<dbReference type="EC" id="2.5.1.39" evidence="1"/>
<dbReference type="EMBL" id="CP000733">
    <property type="protein sequence ID" value="ABS76725.1"/>
    <property type="molecule type" value="Genomic_DNA"/>
</dbReference>
<dbReference type="RefSeq" id="WP_005772835.1">
    <property type="nucleotide sequence ID" value="NC_009727.1"/>
</dbReference>
<dbReference type="SMR" id="A9KGW7"/>
<dbReference type="KEGG" id="cbd:CBUD_2048"/>
<dbReference type="HOGENOM" id="CLU_034879_1_0_6"/>
<dbReference type="UniPathway" id="UPA00232"/>
<dbReference type="Proteomes" id="UP000008555">
    <property type="component" value="Chromosome"/>
</dbReference>
<dbReference type="GO" id="GO:0005886">
    <property type="term" value="C:plasma membrane"/>
    <property type="evidence" value="ECO:0007669"/>
    <property type="project" value="UniProtKB-SubCell"/>
</dbReference>
<dbReference type="GO" id="GO:0008412">
    <property type="term" value="F:4-hydroxybenzoate polyprenyltransferase activity"/>
    <property type="evidence" value="ECO:0007669"/>
    <property type="project" value="UniProtKB-UniRule"/>
</dbReference>
<dbReference type="GO" id="GO:0006744">
    <property type="term" value="P:ubiquinone biosynthetic process"/>
    <property type="evidence" value="ECO:0007669"/>
    <property type="project" value="UniProtKB-UniRule"/>
</dbReference>
<dbReference type="CDD" id="cd13959">
    <property type="entry name" value="PT_UbiA_COQ2"/>
    <property type="match status" value="1"/>
</dbReference>
<dbReference type="FunFam" id="1.10.357.140:FF:000002">
    <property type="entry name" value="4-hydroxybenzoate octaprenyltransferase"/>
    <property type="match status" value="1"/>
</dbReference>
<dbReference type="FunFam" id="1.20.120.1780:FF:000001">
    <property type="entry name" value="4-hydroxybenzoate octaprenyltransferase"/>
    <property type="match status" value="1"/>
</dbReference>
<dbReference type="Gene3D" id="1.10.357.140">
    <property type="entry name" value="UbiA prenyltransferase"/>
    <property type="match status" value="1"/>
</dbReference>
<dbReference type="Gene3D" id="1.20.120.1780">
    <property type="entry name" value="UbiA prenyltransferase"/>
    <property type="match status" value="1"/>
</dbReference>
<dbReference type="HAMAP" id="MF_01635">
    <property type="entry name" value="UbiA"/>
    <property type="match status" value="1"/>
</dbReference>
<dbReference type="InterPro" id="IPR006370">
    <property type="entry name" value="HB_polyprenyltransferase-like"/>
</dbReference>
<dbReference type="InterPro" id="IPR039653">
    <property type="entry name" value="Prenyltransferase"/>
</dbReference>
<dbReference type="InterPro" id="IPR000537">
    <property type="entry name" value="UbiA_prenyltransferase"/>
</dbReference>
<dbReference type="InterPro" id="IPR030470">
    <property type="entry name" value="UbiA_prenylTrfase_CS"/>
</dbReference>
<dbReference type="InterPro" id="IPR044878">
    <property type="entry name" value="UbiA_sf"/>
</dbReference>
<dbReference type="NCBIfam" id="TIGR01474">
    <property type="entry name" value="ubiA_proteo"/>
    <property type="match status" value="1"/>
</dbReference>
<dbReference type="PANTHER" id="PTHR11048:SF28">
    <property type="entry name" value="4-HYDROXYBENZOATE POLYPRENYLTRANSFERASE, MITOCHONDRIAL"/>
    <property type="match status" value="1"/>
</dbReference>
<dbReference type="PANTHER" id="PTHR11048">
    <property type="entry name" value="PRENYLTRANSFERASES"/>
    <property type="match status" value="1"/>
</dbReference>
<dbReference type="Pfam" id="PF01040">
    <property type="entry name" value="UbiA"/>
    <property type="match status" value="1"/>
</dbReference>
<dbReference type="PROSITE" id="PS00943">
    <property type="entry name" value="UBIA"/>
    <property type="match status" value="1"/>
</dbReference>
<sequence length="287" mass="32738">MINLRQQMPHYLRLMRFDKPVGIFLLLWPTLWAVWIAAKGAPSFKIAVIFIAGSVVMRAAGCIVNDFADRHLDKHVQRTQMRPLASGSVSVTEAMLLFAVLSLIAFTLVLLLNRLTVELAVIGILLALVYPFLKRFTHLPQLWLGVAFSWSIPMAFAATVGHVPAVAWLLFFAAVLWPIVYDTQYAMIDREDDVKVGIKSTAILFGRYDRLMIGLLQGSVLLTFGLLGWYLRFNYWFYLGLLVALGLMCYQQFLIRHRKPPDCFAAFRNNNWVGFFIFLGILLTYRN</sequence>
<name>UBIA_COXBN</name>
<protein>
    <recommendedName>
        <fullName evidence="1">4-hydroxybenzoate octaprenyltransferase</fullName>
        <ecNumber evidence="1">2.5.1.39</ecNumber>
    </recommendedName>
    <alternativeName>
        <fullName evidence="1">4-HB polyprenyltransferase</fullName>
    </alternativeName>
</protein>
<keyword id="KW-0997">Cell inner membrane</keyword>
<keyword id="KW-1003">Cell membrane</keyword>
<keyword id="KW-0460">Magnesium</keyword>
<keyword id="KW-0472">Membrane</keyword>
<keyword id="KW-0808">Transferase</keyword>
<keyword id="KW-0812">Transmembrane</keyword>
<keyword id="KW-1133">Transmembrane helix</keyword>
<keyword id="KW-0831">Ubiquinone biosynthesis</keyword>
<organism>
    <name type="scientific">Coxiella burnetii (strain Dugway 5J108-111)</name>
    <dbReference type="NCBI Taxonomy" id="434922"/>
    <lineage>
        <taxon>Bacteria</taxon>
        <taxon>Pseudomonadati</taxon>
        <taxon>Pseudomonadota</taxon>
        <taxon>Gammaproteobacteria</taxon>
        <taxon>Legionellales</taxon>
        <taxon>Coxiellaceae</taxon>
        <taxon>Coxiella</taxon>
    </lineage>
</organism>
<feature type="chain" id="PRO_1000088171" description="4-hydroxybenzoate octaprenyltransferase">
    <location>
        <begin position="1"/>
        <end position="287"/>
    </location>
</feature>
<feature type="transmembrane region" description="Helical" evidence="1">
    <location>
        <begin position="21"/>
        <end position="41"/>
    </location>
</feature>
<feature type="transmembrane region" description="Helical" evidence="1">
    <location>
        <begin position="44"/>
        <end position="64"/>
    </location>
</feature>
<feature type="transmembrane region" description="Helical" evidence="1">
    <location>
        <begin position="91"/>
        <end position="111"/>
    </location>
</feature>
<feature type="transmembrane region" description="Helical" evidence="1">
    <location>
        <begin position="112"/>
        <end position="132"/>
    </location>
</feature>
<feature type="transmembrane region" description="Helical" evidence="1">
    <location>
        <begin position="139"/>
        <end position="159"/>
    </location>
</feature>
<feature type="transmembrane region" description="Helical" evidence="1">
    <location>
        <begin position="160"/>
        <end position="180"/>
    </location>
</feature>
<feature type="transmembrane region" description="Helical" evidence="1">
    <location>
        <begin position="211"/>
        <end position="231"/>
    </location>
</feature>
<feature type="transmembrane region" description="Helical" evidence="1">
    <location>
        <begin position="235"/>
        <end position="255"/>
    </location>
</feature>
<feature type="transmembrane region" description="Helical" evidence="1">
    <location>
        <begin position="263"/>
        <end position="283"/>
    </location>
</feature>